<keyword id="KW-0963">Cytoplasm</keyword>
<keyword id="KW-0312">Gluconeogenesis</keyword>
<keyword id="KW-0324">Glycolysis</keyword>
<keyword id="KW-0413">Isomerase</keyword>
<feature type="chain" id="PRO_1000135518" description="Glucose-6-phosphate isomerase">
    <location>
        <begin position="1"/>
        <end position="549"/>
    </location>
</feature>
<feature type="active site" description="Proton donor" evidence="1">
    <location>
        <position position="353"/>
    </location>
</feature>
<feature type="active site" evidence="1">
    <location>
        <position position="384"/>
    </location>
</feature>
<feature type="active site" evidence="1">
    <location>
        <position position="513"/>
    </location>
</feature>
<evidence type="ECO:0000255" key="1">
    <source>
        <dbReference type="HAMAP-Rule" id="MF_00473"/>
    </source>
</evidence>
<organism>
    <name type="scientific">Brucella melitensis biotype 2 (strain ATCC 23457)</name>
    <dbReference type="NCBI Taxonomy" id="546272"/>
    <lineage>
        <taxon>Bacteria</taxon>
        <taxon>Pseudomonadati</taxon>
        <taxon>Pseudomonadota</taxon>
        <taxon>Alphaproteobacteria</taxon>
        <taxon>Hyphomicrobiales</taxon>
        <taxon>Brucellaceae</taxon>
        <taxon>Brucella/Ochrobactrum group</taxon>
        <taxon>Brucella</taxon>
    </lineage>
</organism>
<name>G6PI_BRUMB</name>
<accession>C0RH03</accession>
<protein>
    <recommendedName>
        <fullName evidence="1">Glucose-6-phosphate isomerase</fullName>
        <shortName evidence="1">GPI</shortName>
        <ecNumber evidence="1">5.3.1.9</ecNumber>
    </recommendedName>
    <alternativeName>
        <fullName evidence="1">Phosphoglucose isomerase</fullName>
        <shortName evidence="1">PGI</shortName>
    </alternativeName>
    <alternativeName>
        <fullName evidence="1">Phosphohexose isomerase</fullName>
        <shortName evidence="1">PHI</shortName>
    </alternativeName>
</protein>
<reference key="1">
    <citation type="submission" date="2009-03" db="EMBL/GenBank/DDBJ databases">
        <title>Brucella melitensis ATCC 23457 whole genome shotgun sequencing project.</title>
        <authorList>
            <person name="Setubal J.C."/>
            <person name="Boyle S."/>
            <person name="Crasta O.R."/>
            <person name="Gillespie J.J."/>
            <person name="Kenyon R.W."/>
            <person name="Lu J."/>
            <person name="Mane S."/>
            <person name="Nagrani S."/>
            <person name="Shallom J.M."/>
            <person name="Shallom S."/>
            <person name="Shukla M."/>
            <person name="Snyder E.E."/>
            <person name="Sobral B.W."/>
            <person name="Wattam A.R."/>
            <person name="Will R."/>
            <person name="Williams K."/>
            <person name="Yoo H."/>
            <person name="Munk C."/>
            <person name="Tapia R."/>
            <person name="Han C."/>
            <person name="Detter J.C."/>
            <person name="Bruce D."/>
            <person name="Brettin T.S."/>
        </authorList>
    </citation>
    <scope>NUCLEOTIDE SEQUENCE [LARGE SCALE GENOMIC DNA]</scope>
    <source>
        <strain>ATCC 23457</strain>
    </source>
</reference>
<gene>
    <name evidence="1" type="primary">pgi</name>
    <name type="ordered locus">BMEA_A0320</name>
</gene>
<comment type="function">
    <text evidence="1">Catalyzes the reversible isomerization of glucose-6-phosphate to fructose-6-phosphate.</text>
</comment>
<comment type="catalytic activity">
    <reaction evidence="1">
        <text>alpha-D-glucose 6-phosphate = beta-D-fructose 6-phosphate</text>
        <dbReference type="Rhea" id="RHEA:11816"/>
        <dbReference type="ChEBI" id="CHEBI:57634"/>
        <dbReference type="ChEBI" id="CHEBI:58225"/>
        <dbReference type="EC" id="5.3.1.9"/>
    </reaction>
</comment>
<comment type="pathway">
    <text evidence="1">Carbohydrate biosynthesis; gluconeogenesis.</text>
</comment>
<comment type="pathway">
    <text evidence="1">Carbohydrate degradation; glycolysis; D-glyceraldehyde 3-phosphate and glycerone phosphate from D-glucose: step 2/4.</text>
</comment>
<comment type="subcellular location">
    <subcellularLocation>
        <location evidence="1">Cytoplasm</location>
    </subcellularLocation>
</comment>
<comment type="similarity">
    <text evidence="1">Belongs to the GPI family.</text>
</comment>
<proteinExistence type="inferred from homology"/>
<dbReference type="EC" id="5.3.1.9" evidence="1"/>
<dbReference type="EMBL" id="CP001488">
    <property type="protein sequence ID" value="ACO00111.1"/>
    <property type="molecule type" value="Genomic_DNA"/>
</dbReference>
<dbReference type="RefSeq" id="WP_004682840.1">
    <property type="nucleotide sequence ID" value="NC_012441.1"/>
</dbReference>
<dbReference type="SMR" id="C0RH03"/>
<dbReference type="GeneID" id="29594490"/>
<dbReference type="KEGG" id="bmi:BMEA_A0320"/>
<dbReference type="HOGENOM" id="CLU_017947_3_1_5"/>
<dbReference type="UniPathway" id="UPA00109">
    <property type="reaction ID" value="UER00181"/>
</dbReference>
<dbReference type="UniPathway" id="UPA00138"/>
<dbReference type="Proteomes" id="UP000001748">
    <property type="component" value="Chromosome I"/>
</dbReference>
<dbReference type="GO" id="GO:0005829">
    <property type="term" value="C:cytosol"/>
    <property type="evidence" value="ECO:0007669"/>
    <property type="project" value="TreeGrafter"/>
</dbReference>
<dbReference type="GO" id="GO:0097367">
    <property type="term" value="F:carbohydrate derivative binding"/>
    <property type="evidence" value="ECO:0007669"/>
    <property type="project" value="InterPro"/>
</dbReference>
<dbReference type="GO" id="GO:0004347">
    <property type="term" value="F:glucose-6-phosphate isomerase activity"/>
    <property type="evidence" value="ECO:0007669"/>
    <property type="project" value="UniProtKB-UniRule"/>
</dbReference>
<dbReference type="GO" id="GO:0048029">
    <property type="term" value="F:monosaccharide binding"/>
    <property type="evidence" value="ECO:0007669"/>
    <property type="project" value="TreeGrafter"/>
</dbReference>
<dbReference type="GO" id="GO:0006094">
    <property type="term" value="P:gluconeogenesis"/>
    <property type="evidence" value="ECO:0007669"/>
    <property type="project" value="UniProtKB-UniRule"/>
</dbReference>
<dbReference type="GO" id="GO:0051156">
    <property type="term" value="P:glucose 6-phosphate metabolic process"/>
    <property type="evidence" value="ECO:0007669"/>
    <property type="project" value="TreeGrafter"/>
</dbReference>
<dbReference type="GO" id="GO:0006096">
    <property type="term" value="P:glycolytic process"/>
    <property type="evidence" value="ECO:0007669"/>
    <property type="project" value="UniProtKB-UniRule"/>
</dbReference>
<dbReference type="CDD" id="cd05015">
    <property type="entry name" value="SIS_PGI_1"/>
    <property type="match status" value="1"/>
</dbReference>
<dbReference type="CDD" id="cd05016">
    <property type="entry name" value="SIS_PGI_2"/>
    <property type="match status" value="1"/>
</dbReference>
<dbReference type="FunFam" id="3.40.50.10490:FF:000018">
    <property type="entry name" value="Glucose-6-phosphate isomerase"/>
    <property type="match status" value="1"/>
</dbReference>
<dbReference type="Gene3D" id="1.10.1390.10">
    <property type="match status" value="1"/>
</dbReference>
<dbReference type="Gene3D" id="3.40.50.10490">
    <property type="entry name" value="Glucose-6-phosphate isomerase like protein, domain 1"/>
    <property type="match status" value="2"/>
</dbReference>
<dbReference type="HAMAP" id="MF_00473">
    <property type="entry name" value="G6P_isomerase"/>
    <property type="match status" value="1"/>
</dbReference>
<dbReference type="InterPro" id="IPR001672">
    <property type="entry name" value="G6P_Isomerase"/>
</dbReference>
<dbReference type="InterPro" id="IPR023096">
    <property type="entry name" value="G6P_Isomerase_C"/>
</dbReference>
<dbReference type="InterPro" id="IPR018189">
    <property type="entry name" value="Phosphoglucose_isomerase_CS"/>
</dbReference>
<dbReference type="InterPro" id="IPR046348">
    <property type="entry name" value="SIS_dom_sf"/>
</dbReference>
<dbReference type="InterPro" id="IPR035476">
    <property type="entry name" value="SIS_PGI_1"/>
</dbReference>
<dbReference type="InterPro" id="IPR035482">
    <property type="entry name" value="SIS_PGI_2"/>
</dbReference>
<dbReference type="NCBIfam" id="NF001211">
    <property type="entry name" value="PRK00179.1"/>
    <property type="match status" value="1"/>
</dbReference>
<dbReference type="PANTHER" id="PTHR11469">
    <property type="entry name" value="GLUCOSE-6-PHOSPHATE ISOMERASE"/>
    <property type="match status" value="1"/>
</dbReference>
<dbReference type="PANTHER" id="PTHR11469:SF1">
    <property type="entry name" value="GLUCOSE-6-PHOSPHATE ISOMERASE"/>
    <property type="match status" value="1"/>
</dbReference>
<dbReference type="Pfam" id="PF00342">
    <property type="entry name" value="PGI"/>
    <property type="match status" value="1"/>
</dbReference>
<dbReference type="PRINTS" id="PR00662">
    <property type="entry name" value="G6PISOMERASE"/>
</dbReference>
<dbReference type="SUPFAM" id="SSF53697">
    <property type="entry name" value="SIS domain"/>
    <property type="match status" value="1"/>
</dbReference>
<dbReference type="PROSITE" id="PS00765">
    <property type="entry name" value="P_GLUCOSE_ISOMERASE_1"/>
    <property type="match status" value="1"/>
</dbReference>
<dbReference type="PROSITE" id="PS00174">
    <property type="entry name" value="P_GLUCOSE_ISOMERASE_2"/>
    <property type="match status" value="1"/>
</dbReference>
<dbReference type="PROSITE" id="PS51463">
    <property type="entry name" value="P_GLUCOSE_ISOMERASE_3"/>
    <property type="match status" value="1"/>
</dbReference>
<sequence>MARDATKLEATVAKLKKHWAESAPRDMRAAFSADPGRFGRYSLCLDDLLFDWSKCRVNDETMALLKELAVAADVEGRRAAMFAGEHINNTEDRAVLHVALRDTSSKEVLVDGHNVLPDVKHVLDRMAAFADGIRSGALKGATGRKITDIVNIGIGGSDLGPVMATLALAPYHDEPRAHFVSNIDGAHIADTLSPLDPASTLIIVASKTFTTIETMTNAQTARKWVADTLGEAAVGAHFAAVSTALDKVAAFGIPEDRVFGFWDWVGGRYSVWSAIGLPVMIAVGPDNFRKFLAGAHAMDVHFRDAPLEKNLPVMLGLIGYWHRAICGYGSRAIIPYDQRLSRLPAYLQQLDMESNGKSVTLDGKPVSGPTGPVVWGEPGTNGQHAFFQLLHQGTDTIPLEFIVAAKGHEPTLDHQHEMLMANCLAQSEALMKGRTLDEARAQLQAKNLPASQVERIAPHRVFSGNRPSLTLIHDMLDPYTLGRLIALYEHRVFVEAQIFGINAFDQWGVELGKELATELLPVVSGKEGASGRDASTQGLVAHLHARRKA</sequence>